<sequence>MEYFNVGKIVNTQGLQGEMRVLSVTDFVEERFKKGQVLALFDEKNQFVMDIEIASHRKQKNFDIIKFKGMYHINDIEKYKGFTLKVAEDQLSDLKDGEFYYHEIIGLDVYEGEELIGKIKEILQPGANDVWVVERHGKRDLLLPYIPPVVLEVDLSNQRVQVELMEGLDDED</sequence>
<feature type="chain" id="PRO_0000163360" description="Ribosome maturation factor RimM">
    <location>
        <begin position="1"/>
        <end position="172"/>
    </location>
</feature>
<feature type="domain" description="PRC barrel" evidence="1">
    <location>
        <begin position="96"/>
        <end position="168"/>
    </location>
</feature>
<name>RIMM_STRA5</name>
<organism>
    <name type="scientific">Streptococcus agalactiae serotype V (strain ATCC BAA-611 / 2603 V/R)</name>
    <dbReference type="NCBI Taxonomy" id="208435"/>
    <lineage>
        <taxon>Bacteria</taxon>
        <taxon>Bacillati</taxon>
        <taxon>Bacillota</taxon>
        <taxon>Bacilli</taxon>
        <taxon>Lactobacillales</taxon>
        <taxon>Streptococcaceae</taxon>
        <taxon>Streptococcus</taxon>
    </lineage>
</organism>
<proteinExistence type="inferred from homology"/>
<protein>
    <recommendedName>
        <fullName evidence="1">Ribosome maturation factor RimM</fullName>
    </recommendedName>
</protein>
<reference key="1">
    <citation type="journal article" date="2002" name="Proc. Natl. Acad. Sci. U.S.A.">
        <title>Complete genome sequence and comparative genomic analysis of an emerging human pathogen, serotype V Streptococcus agalactiae.</title>
        <authorList>
            <person name="Tettelin H."/>
            <person name="Masignani V."/>
            <person name="Cieslewicz M.J."/>
            <person name="Eisen J.A."/>
            <person name="Peterson S.N."/>
            <person name="Wessels M.R."/>
            <person name="Paulsen I.T."/>
            <person name="Nelson K.E."/>
            <person name="Margarit I."/>
            <person name="Read T.D."/>
            <person name="Madoff L.C."/>
            <person name="Wolf A.M."/>
            <person name="Beanan M.J."/>
            <person name="Brinkac L.M."/>
            <person name="Daugherty S.C."/>
            <person name="DeBoy R.T."/>
            <person name="Durkin A.S."/>
            <person name="Kolonay J.F."/>
            <person name="Madupu R."/>
            <person name="Lewis M.R."/>
            <person name="Radune D."/>
            <person name="Fedorova N.B."/>
            <person name="Scanlan D."/>
            <person name="Khouri H.M."/>
            <person name="Mulligan S."/>
            <person name="Carty H.A."/>
            <person name="Cline R.T."/>
            <person name="Van Aken S.E."/>
            <person name="Gill J."/>
            <person name="Scarselli M."/>
            <person name="Mora M."/>
            <person name="Iacobini E.T."/>
            <person name="Brettoni C."/>
            <person name="Galli G."/>
            <person name="Mariani M."/>
            <person name="Vegni F."/>
            <person name="Maione D."/>
            <person name="Rinaudo D."/>
            <person name="Rappuoli R."/>
            <person name="Telford J.L."/>
            <person name="Kasper D.L."/>
            <person name="Grandi G."/>
            <person name="Fraser C.M."/>
        </authorList>
    </citation>
    <scope>NUCLEOTIDE SEQUENCE [LARGE SCALE GENOMIC DNA]</scope>
    <source>
        <strain>ATCC BAA-611 / 2603 V/R</strain>
    </source>
</reference>
<gene>
    <name evidence="1" type="primary">rimM</name>
    <name type="ordered locus">SAG1355</name>
</gene>
<evidence type="ECO:0000255" key="1">
    <source>
        <dbReference type="HAMAP-Rule" id="MF_00014"/>
    </source>
</evidence>
<comment type="function">
    <text evidence="1">An accessory protein needed during the final step in the assembly of 30S ribosomal subunit, possibly for assembly of the head region. Essential for efficient processing of 16S rRNA. May be needed both before and after RbfA during the maturation of 16S rRNA. It has affinity for free ribosomal 30S subunits but not for 70S ribosomes.</text>
</comment>
<comment type="subunit">
    <text evidence="1">Binds ribosomal protein uS19.</text>
</comment>
<comment type="subcellular location">
    <subcellularLocation>
        <location evidence="1">Cytoplasm</location>
    </subcellularLocation>
</comment>
<comment type="domain">
    <text evidence="1">The PRC barrel domain binds ribosomal protein uS19.</text>
</comment>
<comment type="similarity">
    <text evidence="1">Belongs to the RimM family.</text>
</comment>
<keyword id="KW-0143">Chaperone</keyword>
<keyword id="KW-0963">Cytoplasm</keyword>
<keyword id="KW-1185">Reference proteome</keyword>
<keyword id="KW-0690">Ribosome biogenesis</keyword>
<keyword id="KW-0698">rRNA processing</keyword>
<accession>Q8DYW8</accession>
<dbReference type="EMBL" id="AE009948">
    <property type="protein sequence ID" value="AAN00226.1"/>
    <property type="molecule type" value="Genomic_DNA"/>
</dbReference>
<dbReference type="RefSeq" id="NP_688353.1">
    <property type="nucleotide sequence ID" value="NC_004116.1"/>
</dbReference>
<dbReference type="RefSeq" id="WP_000455620.1">
    <property type="nucleotide sequence ID" value="NC_004116.1"/>
</dbReference>
<dbReference type="SMR" id="Q8DYW8"/>
<dbReference type="STRING" id="208435.SAG1355"/>
<dbReference type="GeneID" id="66886219"/>
<dbReference type="KEGG" id="sag:SAG1355"/>
<dbReference type="PATRIC" id="fig|208435.3.peg.1363"/>
<dbReference type="HOGENOM" id="CLU_077636_3_1_9"/>
<dbReference type="OrthoDB" id="9810331at2"/>
<dbReference type="Proteomes" id="UP000000821">
    <property type="component" value="Chromosome"/>
</dbReference>
<dbReference type="GO" id="GO:0005737">
    <property type="term" value="C:cytoplasm"/>
    <property type="evidence" value="ECO:0007669"/>
    <property type="project" value="UniProtKB-SubCell"/>
</dbReference>
<dbReference type="GO" id="GO:0005840">
    <property type="term" value="C:ribosome"/>
    <property type="evidence" value="ECO:0007669"/>
    <property type="project" value="InterPro"/>
</dbReference>
<dbReference type="GO" id="GO:0043022">
    <property type="term" value="F:ribosome binding"/>
    <property type="evidence" value="ECO:0007669"/>
    <property type="project" value="InterPro"/>
</dbReference>
<dbReference type="GO" id="GO:0042274">
    <property type="term" value="P:ribosomal small subunit biogenesis"/>
    <property type="evidence" value="ECO:0007669"/>
    <property type="project" value="UniProtKB-UniRule"/>
</dbReference>
<dbReference type="GO" id="GO:0006364">
    <property type="term" value="P:rRNA processing"/>
    <property type="evidence" value="ECO:0007669"/>
    <property type="project" value="UniProtKB-UniRule"/>
</dbReference>
<dbReference type="Gene3D" id="2.30.30.240">
    <property type="entry name" value="PRC-barrel domain"/>
    <property type="match status" value="1"/>
</dbReference>
<dbReference type="Gene3D" id="2.40.30.60">
    <property type="entry name" value="RimM"/>
    <property type="match status" value="1"/>
</dbReference>
<dbReference type="HAMAP" id="MF_00014">
    <property type="entry name" value="Ribosome_mat_RimM"/>
    <property type="match status" value="1"/>
</dbReference>
<dbReference type="InterPro" id="IPR027275">
    <property type="entry name" value="PRC-brl_dom"/>
</dbReference>
<dbReference type="InterPro" id="IPR011033">
    <property type="entry name" value="PRC_barrel-like_sf"/>
</dbReference>
<dbReference type="InterPro" id="IPR011961">
    <property type="entry name" value="RimM"/>
</dbReference>
<dbReference type="InterPro" id="IPR002676">
    <property type="entry name" value="RimM_N"/>
</dbReference>
<dbReference type="InterPro" id="IPR036976">
    <property type="entry name" value="RimM_N_sf"/>
</dbReference>
<dbReference type="InterPro" id="IPR009000">
    <property type="entry name" value="Transl_B-barrel_sf"/>
</dbReference>
<dbReference type="NCBIfam" id="TIGR02273">
    <property type="entry name" value="16S_RimM"/>
    <property type="match status" value="1"/>
</dbReference>
<dbReference type="PANTHER" id="PTHR33692">
    <property type="entry name" value="RIBOSOME MATURATION FACTOR RIMM"/>
    <property type="match status" value="1"/>
</dbReference>
<dbReference type="PANTHER" id="PTHR33692:SF1">
    <property type="entry name" value="RIBOSOME MATURATION FACTOR RIMM"/>
    <property type="match status" value="1"/>
</dbReference>
<dbReference type="Pfam" id="PF05239">
    <property type="entry name" value="PRC"/>
    <property type="match status" value="1"/>
</dbReference>
<dbReference type="Pfam" id="PF01782">
    <property type="entry name" value="RimM"/>
    <property type="match status" value="1"/>
</dbReference>
<dbReference type="SUPFAM" id="SSF50346">
    <property type="entry name" value="PRC-barrel domain"/>
    <property type="match status" value="1"/>
</dbReference>
<dbReference type="SUPFAM" id="SSF50447">
    <property type="entry name" value="Translation proteins"/>
    <property type="match status" value="1"/>
</dbReference>